<organism>
    <name type="scientific">Maricaulis maris (strain MCS10)</name>
    <name type="common">Caulobacter maris</name>
    <dbReference type="NCBI Taxonomy" id="394221"/>
    <lineage>
        <taxon>Bacteria</taxon>
        <taxon>Pseudomonadati</taxon>
        <taxon>Pseudomonadota</taxon>
        <taxon>Alphaproteobacteria</taxon>
        <taxon>Maricaulales</taxon>
        <taxon>Maricaulaceae</taxon>
        <taxon>Maricaulis</taxon>
    </lineage>
</organism>
<name>AROA_MARMM</name>
<reference key="1">
    <citation type="submission" date="2006-08" db="EMBL/GenBank/DDBJ databases">
        <title>Complete sequence of Maricaulis maris MCS10.</title>
        <authorList>
            <consortium name="US DOE Joint Genome Institute"/>
            <person name="Copeland A."/>
            <person name="Lucas S."/>
            <person name="Lapidus A."/>
            <person name="Barry K."/>
            <person name="Detter J.C."/>
            <person name="Glavina del Rio T."/>
            <person name="Hammon N."/>
            <person name="Israni S."/>
            <person name="Dalin E."/>
            <person name="Tice H."/>
            <person name="Pitluck S."/>
            <person name="Saunders E."/>
            <person name="Brettin T."/>
            <person name="Bruce D."/>
            <person name="Han C."/>
            <person name="Tapia R."/>
            <person name="Gilna P."/>
            <person name="Schmutz J."/>
            <person name="Larimer F."/>
            <person name="Land M."/>
            <person name="Hauser L."/>
            <person name="Kyrpides N."/>
            <person name="Mikhailova N."/>
            <person name="Viollier P."/>
            <person name="Stephens C."/>
            <person name="Richardson P."/>
        </authorList>
    </citation>
    <scope>NUCLEOTIDE SEQUENCE [LARGE SCALE GENOMIC DNA]</scope>
    <source>
        <strain>MCS10</strain>
    </source>
</reference>
<accession>Q0ATJ1</accession>
<gene>
    <name evidence="1" type="primary">aroA</name>
    <name type="ordered locus">Mmar10_0100</name>
</gene>
<sequence length="447" mass="45716">MTPSLKRLSGAMRARPAPALSGTIKAPGDKSISHRAFILGGLAKGVTEVTGLLESDDVINSGRAAAALGAKVEHLGPGHWRIDGCGGQWTTPSAPLDFGNAGTGVRLMMGAVAGTGTSADFIGDESLSSRPMRRVTDPLGEMGARFTTTGGRLPAHLDGGPLAGIHYTPPIASAQVKSAVLLAALGATGTTVVHEPQITRDHTETMLRAFGVTLTVERDGAAATVTLTGPQTLIACPVDVPGDPSSSAFAIVAALISPGSDITLEGVMDNPARTGLIETLKEMGADITLTPGPDMAGEKTMHIHVKHSQLHGITVPATRAPSMIDEYPVLCVAAAYADGITHMPGLEELRAKESDRLAGSAAMLRANGVPVEEGEDSLAVTGMGIGGVPGGGRTVTHHDHRLAMSGLVIGLGAKAASSVDDIAMIATSYPDFFDHIATLGGRLEPLT</sequence>
<comment type="function">
    <text evidence="1">Catalyzes the transfer of the enolpyruvyl moiety of phosphoenolpyruvate (PEP) to the 5-hydroxyl of shikimate-3-phosphate (S3P) to produce enolpyruvyl shikimate-3-phosphate and inorganic phosphate.</text>
</comment>
<comment type="catalytic activity">
    <reaction evidence="1">
        <text>3-phosphoshikimate + phosphoenolpyruvate = 5-O-(1-carboxyvinyl)-3-phosphoshikimate + phosphate</text>
        <dbReference type="Rhea" id="RHEA:21256"/>
        <dbReference type="ChEBI" id="CHEBI:43474"/>
        <dbReference type="ChEBI" id="CHEBI:57701"/>
        <dbReference type="ChEBI" id="CHEBI:58702"/>
        <dbReference type="ChEBI" id="CHEBI:145989"/>
        <dbReference type="EC" id="2.5.1.19"/>
    </reaction>
    <physiologicalReaction direction="left-to-right" evidence="1">
        <dbReference type="Rhea" id="RHEA:21257"/>
    </physiologicalReaction>
</comment>
<comment type="pathway">
    <text evidence="1">Metabolic intermediate biosynthesis; chorismate biosynthesis; chorismate from D-erythrose 4-phosphate and phosphoenolpyruvate: step 6/7.</text>
</comment>
<comment type="subunit">
    <text evidence="1">Monomer.</text>
</comment>
<comment type="subcellular location">
    <subcellularLocation>
        <location evidence="1">Cytoplasm</location>
    </subcellularLocation>
</comment>
<comment type="similarity">
    <text evidence="1">Belongs to the EPSP synthase family.</text>
</comment>
<evidence type="ECO:0000255" key="1">
    <source>
        <dbReference type="HAMAP-Rule" id="MF_00210"/>
    </source>
</evidence>
<evidence type="ECO:0000256" key="2">
    <source>
        <dbReference type="SAM" id="MobiDB-lite"/>
    </source>
</evidence>
<keyword id="KW-0028">Amino-acid biosynthesis</keyword>
<keyword id="KW-0057">Aromatic amino acid biosynthesis</keyword>
<keyword id="KW-0963">Cytoplasm</keyword>
<keyword id="KW-1185">Reference proteome</keyword>
<keyword id="KW-0808">Transferase</keyword>
<protein>
    <recommendedName>
        <fullName evidence="1">3-phosphoshikimate 1-carboxyvinyltransferase</fullName>
        <ecNumber evidence="1">2.5.1.19</ecNumber>
    </recommendedName>
    <alternativeName>
        <fullName evidence="1">5-enolpyruvylshikimate-3-phosphate synthase</fullName>
        <shortName evidence="1">EPSP synthase</shortName>
        <shortName evidence="1">EPSPS</shortName>
    </alternativeName>
</protein>
<dbReference type="EC" id="2.5.1.19" evidence="1"/>
<dbReference type="EMBL" id="CP000449">
    <property type="protein sequence ID" value="ABI64396.1"/>
    <property type="molecule type" value="Genomic_DNA"/>
</dbReference>
<dbReference type="RefSeq" id="WP_011642043.1">
    <property type="nucleotide sequence ID" value="NC_008347.1"/>
</dbReference>
<dbReference type="SMR" id="Q0ATJ1"/>
<dbReference type="STRING" id="394221.Mmar10_0100"/>
<dbReference type="KEGG" id="mmr:Mmar10_0100"/>
<dbReference type="eggNOG" id="COG0128">
    <property type="taxonomic scope" value="Bacteria"/>
</dbReference>
<dbReference type="HOGENOM" id="CLU_024321_0_1_5"/>
<dbReference type="OrthoDB" id="9809920at2"/>
<dbReference type="UniPathway" id="UPA00053">
    <property type="reaction ID" value="UER00089"/>
</dbReference>
<dbReference type="Proteomes" id="UP000001964">
    <property type="component" value="Chromosome"/>
</dbReference>
<dbReference type="GO" id="GO:0005737">
    <property type="term" value="C:cytoplasm"/>
    <property type="evidence" value="ECO:0007669"/>
    <property type="project" value="UniProtKB-SubCell"/>
</dbReference>
<dbReference type="GO" id="GO:0003866">
    <property type="term" value="F:3-phosphoshikimate 1-carboxyvinyltransferase activity"/>
    <property type="evidence" value="ECO:0007669"/>
    <property type="project" value="UniProtKB-UniRule"/>
</dbReference>
<dbReference type="GO" id="GO:0008652">
    <property type="term" value="P:amino acid biosynthetic process"/>
    <property type="evidence" value="ECO:0007669"/>
    <property type="project" value="UniProtKB-KW"/>
</dbReference>
<dbReference type="GO" id="GO:0009073">
    <property type="term" value="P:aromatic amino acid family biosynthetic process"/>
    <property type="evidence" value="ECO:0007669"/>
    <property type="project" value="UniProtKB-KW"/>
</dbReference>
<dbReference type="GO" id="GO:0009423">
    <property type="term" value="P:chorismate biosynthetic process"/>
    <property type="evidence" value="ECO:0007669"/>
    <property type="project" value="UniProtKB-UniRule"/>
</dbReference>
<dbReference type="CDD" id="cd01556">
    <property type="entry name" value="EPSP_synthase"/>
    <property type="match status" value="1"/>
</dbReference>
<dbReference type="FunFam" id="3.65.10.10:FF:000005">
    <property type="entry name" value="3-phosphoshikimate 1-carboxyvinyltransferase"/>
    <property type="match status" value="1"/>
</dbReference>
<dbReference type="Gene3D" id="3.65.10.10">
    <property type="entry name" value="Enolpyruvate transferase domain"/>
    <property type="match status" value="2"/>
</dbReference>
<dbReference type="HAMAP" id="MF_00210">
    <property type="entry name" value="EPSP_synth"/>
    <property type="match status" value="1"/>
</dbReference>
<dbReference type="InterPro" id="IPR001986">
    <property type="entry name" value="Enolpyruvate_Tfrase_dom"/>
</dbReference>
<dbReference type="InterPro" id="IPR036968">
    <property type="entry name" value="Enolpyruvate_Tfrase_sf"/>
</dbReference>
<dbReference type="InterPro" id="IPR006264">
    <property type="entry name" value="EPSP_synthase"/>
</dbReference>
<dbReference type="InterPro" id="IPR023193">
    <property type="entry name" value="EPSP_synthase_CS"/>
</dbReference>
<dbReference type="InterPro" id="IPR013792">
    <property type="entry name" value="RNA3'P_cycl/enolpyr_Trfase_a/b"/>
</dbReference>
<dbReference type="NCBIfam" id="TIGR01356">
    <property type="entry name" value="aroA"/>
    <property type="match status" value="1"/>
</dbReference>
<dbReference type="PANTHER" id="PTHR21090">
    <property type="entry name" value="AROM/DEHYDROQUINATE SYNTHASE"/>
    <property type="match status" value="1"/>
</dbReference>
<dbReference type="PANTHER" id="PTHR21090:SF5">
    <property type="entry name" value="PENTAFUNCTIONAL AROM POLYPEPTIDE"/>
    <property type="match status" value="1"/>
</dbReference>
<dbReference type="Pfam" id="PF00275">
    <property type="entry name" value="EPSP_synthase"/>
    <property type="match status" value="1"/>
</dbReference>
<dbReference type="PIRSF" id="PIRSF000505">
    <property type="entry name" value="EPSPS"/>
    <property type="match status" value="1"/>
</dbReference>
<dbReference type="SUPFAM" id="SSF55205">
    <property type="entry name" value="EPT/RTPC-like"/>
    <property type="match status" value="1"/>
</dbReference>
<dbReference type="PROSITE" id="PS00104">
    <property type="entry name" value="EPSP_SYNTHASE_1"/>
    <property type="match status" value="1"/>
</dbReference>
<proteinExistence type="inferred from homology"/>
<feature type="chain" id="PRO_0000325361" description="3-phosphoshikimate 1-carboxyvinyltransferase">
    <location>
        <begin position="1"/>
        <end position="447"/>
    </location>
</feature>
<feature type="region of interest" description="Disordered" evidence="2">
    <location>
        <begin position="1"/>
        <end position="22"/>
    </location>
</feature>
<feature type="active site" description="Proton acceptor" evidence="1">
    <location>
        <position position="325"/>
    </location>
</feature>
<feature type="binding site" evidence="1">
    <location>
        <position position="30"/>
    </location>
    <ligand>
        <name>3-phosphoshikimate</name>
        <dbReference type="ChEBI" id="CHEBI:145989"/>
    </ligand>
</feature>
<feature type="binding site" evidence="1">
    <location>
        <position position="30"/>
    </location>
    <ligand>
        <name>phosphoenolpyruvate</name>
        <dbReference type="ChEBI" id="CHEBI:58702"/>
    </ligand>
</feature>
<feature type="binding site" evidence="1">
    <location>
        <position position="31"/>
    </location>
    <ligand>
        <name>3-phosphoshikimate</name>
        <dbReference type="ChEBI" id="CHEBI:145989"/>
    </ligand>
</feature>
<feature type="binding site" evidence="1">
    <location>
        <position position="35"/>
    </location>
    <ligand>
        <name>3-phosphoshikimate</name>
        <dbReference type="ChEBI" id="CHEBI:145989"/>
    </ligand>
</feature>
<feature type="binding site" evidence="1">
    <location>
        <position position="102"/>
    </location>
    <ligand>
        <name>phosphoenolpyruvate</name>
        <dbReference type="ChEBI" id="CHEBI:58702"/>
    </ligand>
</feature>
<feature type="binding site" evidence="1">
    <location>
        <position position="130"/>
    </location>
    <ligand>
        <name>phosphoenolpyruvate</name>
        <dbReference type="ChEBI" id="CHEBI:58702"/>
    </ligand>
</feature>
<feature type="binding site" evidence="1">
    <location>
        <position position="173"/>
    </location>
    <ligand>
        <name>3-phosphoshikimate</name>
        <dbReference type="ChEBI" id="CHEBI:145989"/>
    </ligand>
</feature>
<feature type="binding site" evidence="1">
    <location>
        <position position="175"/>
    </location>
    <ligand>
        <name>3-phosphoshikimate</name>
        <dbReference type="ChEBI" id="CHEBI:145989"/>
    </ligand>
</feature>
<feature type="binding site" evidence="1">
    <location>
        <position position="175"/>
    </location>
    <ligand>
        <name>phosphoenolpyruvate</name>
        <dbReference type="ChEBI" id="CHEBI:58702"/>
    </ligand>
</feature>
<feature type="binding site" evidence="1">
    <location>
        <position position="325"/>
    </location>
    <ligand>
        <name>3-phosphoshikimate</name>
        <dbReference type="ChEBI" id="CHEBI:145989"/>
    </ligand>
</feature>
<feature type="binding site" evidence="1">
    <location>
        <position position="352"/>
    </location>
    <ligand>
        <name>3-phosphoshikimate</name>
        <dbReference type="ChEBI" id="CHEBI:145989"/>
    </ligand>
</feature>
<feature type="binding site" evidence="1">
    <location>
        <position position="356"/>
    </location>
    <ligand>
        <name>phosphoenolpyruvate</name>
        <dbReference type="ChEBI" id="CHEBI:58702"/>
    </ligand>
</feature>
<feature type="binding site" evidence="1">
    <location>
        <position position="401"/>
    </location>
    <ligand>
        <name>phosphoenolpyruvate</name>
        <dbReference type="ChEBI" id="CHEBI:58702"/>
    </ligand>
</feature>